<feature type="chain" id="PRO_0000274031" description="Proteasome subunit alpha type-1">
    <location>
        <begin position="1"/>
        <end position="263"/>
    </location>
</feature>
<feature type="region of interest" description="Disordered" evidence="5">
    <location>
        <begin position="232"/>
        <end position="263"/>
    </location>
</feature>
<feature type="compositionally biased region" description="Basic and acidic residues" evidence="5">
    <location>
        <begin position="253"/>
        <end position="263"/>
    </location>
</feature>
<feature type="modified residue" description="N-acetylmethionine" evidence="2">
    <location>
        <position position="1"/>
    </location>
</feature>
<feature type="modified residue" description="Phosphoserine; alternate" evidence="3">
    <location>
        <position position="110"/>
    </location>
</feature>
<feature type="modified residue" description="Phosphoserine" evidence="3">
    <location>
        <position position="177"/>
    </location>
</feature>
<feature type="glycosylation site" description="O-linked (GlcNAc) serine; alternate" evidence="1">
    <location>
        <position position="110"/>
    </location>
</feature>
<feature type="cross-link" description="Glycyl lysine isopeptide (Lys-Gly) (interchain with G-Cter in ubiquitin)" evidence="3">
    <location>
        <position position="115"/>
    </location>
</feature>
<feature type="cross-link" description="Glycyl lysine isopeptide (Lys-Gly) (interchain with G-Cter in ubiquitin)" evidence="3">
    <location>
        <position position="208"/>
    </location>
</feature>
<feature type="strand" evidence="10">
    <location>
        <begin position="6"/>
        <end position="8"/>
    </location>
</feature>
<feature type="helix" evidence="9">
    <location>
        <begin position="20"/>
        <end position="31"/>
    </location>
</feature>
<feature type="strand" evidence="9">
    <location>
        <begin position="35"/>
        <end position="39"/>
    </location>
</feature>
<feature type="strand" evidence="9">
    <location>
        <begin position="41"/>
        <end position="49"/>
    </location>
</feature>
<feature type="strand" evidence="8">
    <location>
        <begin position="52"/>
        <end position="57"/>
    </location>
</feature>
<feature type="strand" evidence="9">
    <location>
        <begin position="63"/>
        <end position="67"/>
    </location>
</feature>
<feature type="strand" evidence="9">
    <location>
        <begin position="70"/>
        <end position="76"/>
    </location>
</feature>
<feature type="helix" evidence="9">
    <location>
        <begin position="78"/>
        <end position="99"/>
    </location>
</feature>
<feature type="helix" evidence="9">
    <location>
        <begin position="105"/>
        <end position="117"/>
    </location>
</feature>
<feature type="helix" evidence="9">
    <location>
        <begin position="118"/>
        <end position="120"/>
    </location>
</feature>
<feature type="strand" evidence="9">
    <location>
        <begin position="130"/>
        <end position="138"/>
    </location>
</feature>
<feature type="strand" evidence="9">
    <location>
        <begin position="141"/>
        <end position="147"/>
    </location>
</feature>
<feature type="strand" evidence="7">
    <location>
        <begin position="149"/>
        <end position="151"/>
    </location>
</feature>
<feature type="strand" evidence="9">
    <location>
        <begin position="153"/>
        <end position="162"/>
    </location>
</feature>
<feature type="helix" evidence="9">
    <location>
        <begin position="165"/>
        <end position="179"/>
    </location>
</feature>
<feature type="helix" evidence="9">
    <location>
        <begin position="184"/>
        <end position="196"/>
    </location>
</feature>
<feature type="strand" evidence="9">
    <location>
        <begin position="209"/>
        <end position="218"/>
    </location>
</feature>
<feature type="strand" evidence="9">
    <location>
        <begin position="222"/>
        <end position="224"/>
    </location>
</feature>
<feature type="strand" evidence="9">
    <location>
        <begin position="226"/>
        <end position="229"/>
    </location>
</feature>
<feature type="helix" evidence="9">
    <location>
        <begin position="230"/>
        <end position="233"/>
    </location>
</feature>
<accession>Q3T0X5</accession>
<name>PSA1_BOVIN</name>
<organism>
    <name type="scientific">Bos taurus</name>
    <name type="common">Bovine</name>
    <dbReference type="NCBI Taxonomy" id="9913"/>
    <lineage>
        <taxon>Eukaryota</taxon>
        <taxon>Metazoa</taxon>
        <taxon>Chordata</taxon>
        <taxon>Craniata</taxon>
        <taxon>Vertebrata</taxon>
        <taxon>Euteleostomi</taxon>
        <taxon>Mammalia</taxon>
        <taxon>Eutheria</taxon>
        <taxon>Laurasiatheria</taxon>
        <taxon>Artiodactyla</taxon>
        <taxon>Ruminantia</taxon>
        <taxon>Pecora</taxon>
        <taxon>Bovidae</taxon>
        <taxon>Bovinae</taxon>
        <taxon>Bos</taxon>
    </lineage>
</organism>
<comment type="function">
    <text evidence="3">Component of the 20S core proteasome complex involved in the proteolytic degradation of most intracellular proteins. This complex plays numerous essential roles within the cell by associating with different regulatory particles. Associated with two 19S regulatory particles, forms the 26S proteasome and thus participates in the ATP-dependent degradation of ubiquitinated proteins. The 26S proteasome plays a key role in the maintenance of protein homeostasis by removing misfolded or damaged proteins that could impair cellular functions, and by removing proteins whose functions are no longer required. Associated with the PA200 or PA28, the 20S proteasome mediates ubiquitin-independent protein degradation. This type of proteolysis is required in several pathways including spermatogenesis (20S-PA200 complex) or generation of a subset of MHC class I-presented antigenic peptides (20S-PA28 complex).</text>
</comment>
<comment type="subunit">
    <text evidence="3 6">The 26S proteasome consists of a 20S proteasome core and two 19S regulatory subunits. The 20S proteasome core is a barrel-shaped complex made of 28 subunits that are arranged in four stacked rings. The two outer rings are each formed by seven alpha subunits, and the two inner rings are formed by seven beta subunits. The proteolytic activity is exerted by three beta-subunits PSMB5, PSMB6 and PSMB7 (PubMed:12015144). Interacts with NOTCH3 (By similarity). Interacts with ZFAND1 (By similarity).</text>
</comment>
<comment type="subcellular location">
    <subcellularLocation>
        <location evidence="3">Cytoplasm</location>
    </subcellularLocation>
    <subcellularLocation>
        <location evidence="3">Nucleus</location>
    </subcellularLocation>
    <text evidence="3">Translocated from the cytoplasm into the nucleus following interaction with AKIRIN2, which bridges the proteasome with the nuclear import receptor IPO9.</text>
</comment>
<comment type="similarity">
    <text evidence="4">Belongs to the peptidase T1A family.</text>
</comment>
<reference key="1">
    <citation type="submission" date="2005-08" db="EMBL/GenBank/DDBJ databases">
        <authorList>
            <consortium name="NIH - Mammalian Gene Collection (MGC) project"/>
        </authorList>
    </citation>
    <scope>NUCLEOTIDE SEQUENCE [LARGE SCALE MRNA]</scope>
    <source>
        <strain>Crossbred X Angus</strain>
        <tissue>Ileum</tissue>
    </source>
</reference>
<reference key="2">
    <citation type="journal article" date="2002" name="Structure">
        <title>The structure of the mammalian 20S proteasome at 2.75 A resolution.</title>
        <authorList>
            <person name="Unno M."/>
            <person name="Mizushima T."/>
            <person name="Morimoto Y."/>
            <person name="Tomisugi Y."/>
            <person name="Tanaka K."/>
            <person name="Yasuoka N."/>
            <person name="Tsukihara T."/>
        </authorList>
    </citation>
    <scope>X-RAY CRYSTALLOGRAPHY (2.75 ANGSTROMS) OF COMPLEX WITH THE 20S PROTEASOME</scope>
</reference>
<protein>
    <recommendedName>
        <fullName>Proteasome subunit alpha type-1</fullName>
    </recommendedName>
</protein>
<dbReference type="EMBL" id="BC102216">
    <property type="protein sequence ID" value="AAI02217.1"/>
    <property type="molecule type" value="mRNA"/>
</dbReference>
<dbReference type="RefSeq" id="NP_001030387.1">
    <property type="nucleotide sequence ID" value="NM_001035310.2"/>
</dbReference>
<dbReference type="PDB" id="1IRU">
    <property type="method" value="X-ray"/>
    <property type="resolution" value="2.75 A"/>
    <property type="chains" value="F/T=1-263"/>
</dbReference>
<dbReference type="PDB" id="7DR6">
    <property type="method" value="EM"/>
    <property type="resolution" value="4.10 A"/>
    <property type="chains" value="Q/c=1-263"/>
</dbReference>
<dbReference type="PDB" id="7DR7">
    <property type="method" value="EM"/>
    <property type="resolution" value="3.30 A"/>
    <property type="chains" value="C/Q=1-263"/>
</dbReference>
<dbReference type="PDB" id="7DRW">
    <property type="method" value="EM"/>
    <property type="resolution" value="4.20 A"/>
    <property type="chains" value="F/b=1-263"/>
</dbReference>
<dbReference type="PDB" id="8AZK">
    <property type="method" value="EM"/>
    <property type="resolution" value="3.10 A"/>
    <property type="chains" value="F/T=1-263"/>
</dbReference>
<dbReference type="PDB" id="8FZ5">
    <property type="method" value="EM"/>
    <property type="resolution" value="2.23 A"/>
    <property type="chains" value="F/T=1-263"/>
</dbReference>
<dbReference type="PDB" id="8FZ6">
    <property type="method" value="EM"/>
    <property type="resolution" value="2.54 A"/>
    <property type="chains" value="F/T=1-263"/>
</dbReference>
<dbReference type="PDBsum" id="1IRU"/>
<dbReference type="PDBsum" id="7DR6"/>
<dbReference type="PDBsum" id="7DR7"/>
<dbReference type="PDBsum" id="7DRW"/>
<dbReference type="PDBsum" id="8AZK"/>
<dbReference type="PDBsum" id="8FZ5"/>
<dbReference type="PDBsum" id="8FZ6"/>
<dbReference type="EMDB" id="EMD-15767"/>
<dbReference type="EMDB" id="EMD-29603"/>
<dbReference type="EMDB" id="EMD-29604"/>
<dbReference type="EMDB" id="EMD-30824"/>
<dbReference type="EMDB" id="EMD-30825"/>
<dbReference type="EMDB" id="EMD-30828"/>
<dbReference type="SMR" id="Q3T0X5"/>
<dbReference type="FunCoup" id="Q3T0X5">
    <property type="interactions" value="3751"/>
</dbReference>
<dbReference type="STRING" id="9913.ENSBTAP00000008621"/>
<dbReference type="MEROPS" id="T01.976"/>
<dbReference type="GlyCosmos" id="Q3T0X5">
    <property type="glycosylation" value="1 site, No reported glycans"/>
</dbReference>
<dbReference type="GlyGen" id="Q3T0X5">
    <property type="glycosylation" value="1 site"/>
</dbReference>
<dbReference type="PaxDb" id="9913-ENSBTAP00000008621"/>
<dbReference type="PeptideAtlas" id="Q3T0X5"/>
<dbReference type="GeneID" id="515503"/>
<dbReference type="KEGG" id="bta:515503"/>
<dbReference type="CTD" id="5682"/>
<dbReference type="VEuPathDB" id="HostDB:ENSBTAG00000006564"/>
<dbReference type="eggNOG" id="KOG0863">
    <property type="taxonomic scope" value="Eukaryota"/>
</dbReference>
<dbReference type="HOGENOM" id="CLU_035750_8_0_1"/>
<dbReference type="InParanoid" id="Q3T0X5"/>
<dbReference type="OMA" id="NTQVYGK"/>
<dbReference type="OrthoDB" id="431557at2759"/>
<dbReference type="TreeFam" id="TF106206"/>
<dbReference type="Reactome" id="R-BTA-1169091">
    <property type="pathway name" value="Activation of NF-kappaB in B cells"/>
</dbReference>
<dbReference type="Reactome" id="R-BTA-1234176">
    <property type="pathway name" value="Oxygen-dependent proline hydroxylation of Hypoxia-inducible Factor Alpha"/>
</dbReference>
<dbReference type="Reactome" id="R-BTA-1236978">
    <property type="pathway name" value="Cross-presentation of soluble exogenous antigens (endosomes)"/>
</dbReference>
<dbReference type="Reactome" id="R-BTA-174084">
    <property type="pathway name" value="Autodegradation of Cdh1 by Cdh1:APC/C"/>
</dbReference>
<dbReference type="Reactome" id="R-BTA-174154">
    <property type="pathway name" value="APC/C:Cdc20 mediated degradation of Securin"/>
</dbReference>
<dbReference type="Reactome" id="R-BTA-174178">
    <property type="pathway name" value="APC/C:Cdh1 mediated degradation of Cdc20 and other APC/C:Cdh1 targeted proteins in late mitosis/early G1"/>
</dbReference>
<dbReference type="Reactome" id="R-BTA-174184">
    <property type="pathway name" value="Cdc20:Phospho-APC/C mediated degradation of Cyclin A"/>
</dbReference>
<dbReference type="Reactome" id="R-BTA-187577">
    <property type="pathway name" value="SCF(Skp2)-mediated degradation of p27/p21"/>
</dbReference>
<dbReference type="Reactome" id="R-BTA-195253">
    <property type="pathway name" value="Degradation of beta-catenin by the destruction complex"/>
</dbReference>
<dbReference type="Reactome" id="R-BTA-202424">
    <property type="pathway name" value="Downstream TCR signaling"/>
</dbReference>
<dbReference type="Reactome" id="R-BTA-2467813">
    <property type="pathway name" value="Separation of Sister Chromatids"/>
</dbReference>
<dbReference type="Reactome" id="R-BTA-2871837">
    <property type="pathway name" value="FCERI mediated NF-kB activation"/>
</dbReference>
<dbReference type="Reactome" id="R-BTA-349425">
    <property type="pathway name" value="Autodegradation of the E3 ubiquitin ligase COP1"/>
</dbReference>
<dbReference type="Reactome" id="R-BTA-350562">
    <property type="pathway name" value="Regulation of ornithine decarboxylase (ODC)"/>
</dbReference>
<dbReference type="Reactome" id="R-BTA-382556">
    <property type="pathway name" value="ABC-family proteins mediated transport"/>
</dbReference>
<dbReference type="Reactome" id="R-BTA-450408">
    <property type="pathway name" value="AUF1 (hnRNP D0) binds and destabilizes mRNA"/>
</dbReference>
<dbReference type="Reactome" id="R-BTA-4608870">
    <property type="pathway name" value="Asymmetric localization of PCP proteins"/>
</dbReference>
<dbReference type="Reactome" id="R-BTA-4641257">
    <property type="pathway name" value="Degradation of AXIN"/>
</dbReference>
<dbReference type="Reactome" id="R-BTA-4641258">
    <property type="pathway name" value="Degradation of DVL"/>
</dbReference>
<dbReference type="Reactome" id="R-BTA-5358346">
    <property type="pathway name" value="Hedgehog ligand biogenesis"/>
</dbReference>
<dbReference type="Reactome" id="R-BTA-5607761">
    <property type="pathway name" value="Dectin-1 mediated noncanonical NF-kB signaling"/>
</dbReference>
<dbReference type="Reactome" id="R-BTA-5607764">
    <property type="pathway name" value="CLEC7A (Dectin-1) signaling"/>
</dbReference>
<dbReference type="Reactome" id="R-BTA-5610780">
    <property type="pathway name" value="Degradation of GLI1 by the proteasome"/>
</dbReference>
<dbReference type="Reactome" id="R-BTA-5610785">
    <property type="pathway name" value="GLI3 is processed to GLI3R by the proteasome"/>
</dbReference>
<dbReference type="Reactome" id="R-BTA-5632684">
    <property type="pathway name" value="Hedgehog 'on' state"/>
</dbReference>
<dbReference type="Reactome" id="R-BTA-5668541">
    <property type="pathway name" value="TNFR2 non-canonical NF-kB pathway"/>
</dbReference>
<dbReference type="Reactome" id="R-BTA-5676590">
    <property type="pathway name" value="NIK--&gt;noncanonical NF-kB signaling"/>
</dbReference>
<dbReference type="Reactome" id="R-BTA-5687128">
    <property type="pathway name" value="MAPK6/MAPK4 signaling"/>
</dbReference>
<dbReference type="Reactome" id="R-BTA-5689603">
    <property type="pathway name" value="UCH proteinases"/>
</dbReference>
<dbReference type="Reactome" id="R-BTA-5689880">
    <property type="pathway name" value="Ub-specific processing proteases"/>
</dbReference>
<dbReference type="Reactome" id="R-BTA-68867">
    <property type="pathway name" value="Assembly of the pre-replicative complex"/>
</dbReference>
<dbReference type="Reactome" id="R-BTA-68949">
    <property type="pathway name" value="Orc1 removal from chromatin"/>
</dbReference>
<dbReference type="Reactome" id="R-BTA-69017">
    <property type="pathway name" value="CDK-mediated phosphorylation and removal of Cdc6"/>
</dbReference>
<dbReference type="Reactome" id="R-BTA-69481">
    <property type="pathway name" value="G2/M Checkpoints"/>
</dbReference>
<dbReference type="Reactome" id="R-BTA-69601">
    <property type="pathway name" value="Ubiquitin Mediated Degradation of Phosphorylated Cdc25A"/>
</dbReference>
<dbReference type="Reactome" id="R-BTA-75815">
    <property type="pathway name" value="Ubiquitin-dependent degradation of Cyclin D"/>
</dbReference>
<dbReference type="Reactome" id="R-BTA-8852276">
    <property type="pathway name" value="The role of GTSE1 in G2/M progression after G2 checkpoint"/>
</dbReference>
<dbReference type="Reactome" id="R-BTA-8854050">
    <property type="pathway name" value="FBXL7 down-regulates AURKA during mitotic entry and in early mitosis"/>
</dbReference>
<dbReference type="Reactome" id="R-BTA-8939236">
    <property type="pathway name" value="RUNX1 regulates transcription of genes involved in differentiation of HSCs"/>
</dbReference>
<dbReference type="Reactome" id="R-BTA-8939902">
    <property type="pathway name" value="Regulation of RUNX2 expression and activity"/>
</dbReference>
<dbReference type="Reactome" id="R-BTA-8941858">
    <property type="pathway name" value="Regulation of RUNX3 expression and activity"/>
</dbReference>
<dbReference type="Reactome" id="R-BTA-8948751">
    <property type="pathway name" value="Regulation of PTEN stability and activity"/>
</dbReference>
<dbReference type="Reactome" id="R-BTA-8951664">
    <property type="pathway name" value="Neddylation"/>
</dbReference>
<dbReference type="Reactome" id="R-BTA-9020702">
    <property type="pathway name" value="Interleukin-1 signaling"/>
</dbReference>
<dbReference type="Reactome" id="R-BTA-9755511">
    <property type="pathway name" value="KEAP1-NFE2L2 pathway"/>
</dbReference>
<dbReference type="Reactome" id="R-BTA-9762114">
    <property type="pathway name" value="GSK3B and BTRC:CUL1-mediated-degradation of NFE2L2"/>
</dbReference>
<dbReference type="Reactome" id="R-BTA-983168">
    <property type="pathway name" value="Antigen processing: Ubiquitination &amp; Proteasome degradation"/>
</dbReference>
<dbReference type="Reactome" id="R-BTA-9907900">
    <property type="pathway name" value="Proteasome assembly"/>
</dbReference>
<dbReference type="EvolutionaryTrace" id="Q3T0X5"/>
<dbReference type="Proteomes" id="UP000009136">
    <property type="component" value="Chromosome 15"/>
</dbReference>
<dbReference type="Bgee" id="ENSBTAG00000006564">
    <property type="expression patterns" value="Expressed in semen and 105 other cell types or tissues"/>
</dbReference>
<dbReference type="GO" id="GO:0005829">
    <property type="term" value="C:cytosol"/>
    <property type="evidence" value="ECO:0000304"/>
    <property type="project" value="Reactome"/>
</dbReference>
<dbReference type="GO" id="GO:0005634">
    <property type="term" value="C:nucleus"/>
    <property type="evidence" value="ECO:0000318"/>
    <property type="project" value="GO_Central"/>
</dbReference>
<dbReference type="GO" id="GO:0005839">
    <property type="term" value="C:proteasome core complex"/>
    <property type="evidence" value="ECO:0000250"/>
    <property type="project" value="UniProtKB"/>
</dbReference>
<dbReference type="GO" id="GO:0019773">
    <property type="term" value="C:proteasome core complex, alpha-subunit complex"/>
    <property type="evidence" value="ECO:0000250"/>
    <property type="project" value="UniProtKB"/>
</dbReference>
<dbReference type="GO" id="GO:0002376">
    <property type="term" value="P:immune system process"/>
    <property type="evidence" value="ECO:0007669"/>
    <property type="project" value="UniProtKB-KW"/>
</dbReference>
<dbReference type="GO" id="GO:0043161">
    <property type="term" value="P:proteasome-mediated ubiquitin-dependent protein catabolic process"/>
    <property type="evidence" value="ECO:0000318"/>
    <property type="project" value="GO_Central"/>
</dbReference>
<dbReference type="CDD" id="cd03749">
    <property type="entry name" value="proteasome_alpha_type_1"/>
    <property type="match status" value="1"/>
</dbReference>
<dbReference type="FunFam" id="3.60.20.10:FF:000025">
    <property type="entry name" value="Proteasome subunit alpha type"/>
    <property type="match status" value="1"/>
</dbReference>
<dbReference type="Gene3D" id="3.60.20.10">
    <property type="entry name" value="Glutamine Phosphoribosylpyrophosphate, subunit 1, domain 1"/>
    <property type="match status" value="1"/>
</dbReference>
<dbReference type="InterPro" id="IPR029055">
    <property type="entry name" value="Ntn_hydrolases_N"/>
</dbReference>
<dbReference type="InterPro" id="IPR050115">
    <property type="entry name" value="Proteasome_alpha"/>
</dbReference>
<dbReference type="InterPro" id="IPR023332">
    <property type="entry name" value="Proteasome_alpha-type"/>
</dbReference>
<dbReference type="InterPro" id="IPR035144">
    <property type="entry name" value="Proteasome_alpha1"/>
</dbReference>
<dbReference type="InterPro" id="IPR000426">
    <property type="entry name" value="Proteasome_asu_N"/>
</dbReference>
<dbReference type="InterPro" id="IPR001353">
    <property type="entry name" value="Proteasome_sua/b"/>
</dbReference>
<dbReference type="PANTHER" id="PTHR11599">
    <property type="entry name" value="PROTEASOME SUBUNIT ALPHA/BETA"/>
    <property type="match status" value="1"/>
</dbReference>
<dbReference type="Pfam" id="PF00227">
    <property type="entry name" value="Proteasome"/>
    <property type="match status" value="1"/>
</dbReference>
<dbReference type="Pfam" id="PF10584">
    <property type="entry name" value="Proteasome_A_N"/>
    <property type="match status" value="1"/>
</dbReference>
<dbReference type="SMART" id="SM00948">
    <property type="entry name" value="Proteasome_A_N"/>
    <property type="match status" value="1"/>
</dbReference>
<dbReference type="SUPFAM" id="SSF56235">
    <property type="entry name" value="N-terminal nucleophile aminohydrolases (Ntn hydrolases)"/>
    <property type="match status" value="1"/>
</dbReference>
<dbReference type="PROSITE" id="PS00388">
    <property type="entry name" value="PROTEASOME_ALPHA_1"/>
    <property type="match status" value="1"/>
</dbReference>
<dbReference type="PROSITE" id="PS51475">
    <property type="entry name" value="PROTEASOME_ALPHA_2"/>
    <property type="match status" value="1"/>
</dbReference>
<keyword id="KW-0002">3D-structure</keyword>
<keyword id="KW-0007">Acetylation</keyword>
<keyword id="KW-0963">Cytoplasm</keyword>
<keyword id="KW-0325">Glycoprotein</keyword>
<keyword id="KW-0391">Immunity</keyword>
<keyword id="KW-1017">Isopeptide bond</keyword>
<keyword id="KW-0539">Nucleus</keyword>
<keyword id="KW-0597">Phosphoprotein</keyword>
<keyword id="KW-0647">Proteasome</keyword>
<keyword id="KW-1185">Reference proteome</keyword>
<keyword id="KW-0832">Ubl conjugation</keyword>
<proteinExistence type="evidence at protein level"/>
<sequence>MFRNQYDNDVTVWSPQGRIHQIEYAMEAVKQGSATVGLKSKTHAVLVALKRAQSELAAHQKKILHVDNHIGISIAGLTADARLLCNFMRQECLDSRFVFDRPLPVSRLVSLIGSKTQIPTQRYGRRPYGVGLLIAGYDDMGPHIFQTCPSANYFDCRAMSIGARSQSARTYLERHMSEFMECNLNELVKHGLRALRETLPAEQDLTTKNVSIGIVGKDLEFTIYDDDDVSPFLEGLEERPQRKAQPTQPADEPAEKADEPMEH</sequence>
<evidence type="ECO:0000250" key="1"/>
<evidence type="ECO:0000250" key="2">
    <source>
        <dbReference type="UniProtKB" id="P18420"/>
    </source>
</evidence>
<evidence type="ECO:0000250" key="3">
    <source>
        <dbReference type="UniProtKB" id="P25786"/>
    </source>
</evidence>
<evidence type="ECO:0000255" key="4">
    <source>
        <dbReference type="PROSITE-ProRule" id="PRU00808"/>
    </source>
</evidence>
<evidence type="ECO:0000256" key="5">
    <source>
        <dbReference type="SAM" id="MobiDB-lite"/>
    </source>
</evidence>
<evidence type="ECO:0000269" key="6">
    <source>
    </source>
</evidence>
<evidence type="ECO:0007829" key="7">
    <source>
        <dbReference type="PDB" id="1IRU"/>
    </source>
</evidence>
<evidence type="ECO:0007829" key="8">
    <source>
        <dbReference type="PDB" id="7DR7"/>
    </source>
</evidence>
<evidence type="ECO:0007829" key="9">
    <source>
        <dbReference type="PDB" id="8FZ5"/>
    </source>
</evidence>
<evidence type="ECO:0007829" key="10">
    <source>
        <dbReference type="PDB" id="8FZ6"/>
    </source>
</evidence>
<gene>
    <name type="primary">PSMA1</name>
</gene>